<accession>Q5HM97</accession>
<name>ALF2_STAEQ</name>
<reference key="1">
    <citation type="journal article" date="2005" name="J. Bacteriol.">
        <title>Insights on evolution of virulence and resistance from the complete genome analysis of an early methicillin-resistant Staphylococcus aureus strain and a biofilm-producing methicillin-resistant Staphylococcus epidermidis strain.</title>
        <authorList>
            <person name="Gill S.R."/>
            <person name="Fouts D.E."/>
            <person name="Archer G.L."/>
            <person name="Mongodin E.F."/>
            <person name="DeBoy R.T."/>
            <person name="Ravel J."/>
            <person name="Paulsen I.T."/>
            <person name="Kolonay J.F."/>
            <person name="Brinkac L.M."/>
            <person name="Beanan M.J."/>
            <person name="Dodson R.J."/>
            <person name="Daugherty S.C."/>
            <person name="Madupu R."/>
            <person name="Angiuoli S.V."/>
            <person name="Durkin A.S."/>
            <person name="Haft D.H."/>
            <person name="Vamathevan J.J."/>
            <person name="Khouri H."/>
            <person name="Utterback T.R."/>
            <person name="Lee C."/>
            <person name="Dimitrov G."/>
            <person name="Jiang L."/>
            <person name="Qin H."/>
            <person name="Weidman J."/>
            <person name="Tran K."/>
            <person name="Kang K.H."/>
            <person name="Hance I.R."/>
            <person name="Nelson K.E."/>
            <person name="Fraser C.M."/>
        </authorList>
    </citation>
    <scope>NUCLEOTIDE SEQUENCE [LARGE SCALE GENOMIC DNA]</scope>
    <source>
        <strain>ATCC 35984 / DSM 28319 / BCRC 17069 / CCUG 31568 / BM 3577 / RP62A</strain>
    </source>
</reference>
<proteinExistence type="inferred from homology"/>
<dbReference type="EC" id="4.1.2.13"/>
<dbReference type="EMBL" id="CP000029">
    <property type="protein sequence ID" value="AAW55054.1"/>
    <property type="molecule type" value="Genomic_DNA"/>
</dbReference>
<dbReference type="SMR" id="Q5HM97"/>
<dbReference type="STRING" id="176279.SERP1732"/>
<dbReference type="KEGG" id="ser:SERP1732"/>
<dbReference type="eggNOG" id="COG0191">
    <property type="taxonomic scope" value="Bacteria"/>
</dbReference>
<dbReference type="HOGENOM" id="CLU_040088_0_1_9"/>
<dbReference type="UniPathway" id="UPA00109">
    <property type="reaction ID" value="UER00183"/>
</dbReference>
<dbReference type="Proteomes" id="UP000000531">
    <property type="component" value="Chromosome"/>
</dbReference>
<dbReference type="GO" id="GO:0004332">
    <property type="term" value="F:fructose-bisphosphate aldolase activity"/>
    <property type="evidence" value="ECO:0007669"/>
    <property type="project" value="UniProtKB-EC"/>
</dbReference>
<dbReference type="GO" id="GO:0008270">
    <property type="term" value="F:zinc ion binding"/>
    <property type="evidence" value="ECO:0007669"/>
    <property type="project" value="InterPro"/>
</dbReference>
<dbReference type="GO" id="GO:0030388">
    <property type="term" value="P:fructose 1,6-bisphosphate metabolic process"/>
    <property type="evidence" value="ECO:0007669"/>
    <property type="project" value="InterPro"/>
</dbReference>
<dbReference type="GO" id="GO:0006096">
    <property type="term" value="P:glycolytic process"/>
    <property type="evidence" value="ECO:0007669"/>
    <property type="project" value="UniProtKB-UniPathway"/>
</dbReference>
<dbReference type="CDD" id="cd00947">
    <property type="entry name" value="TBP_aldolase_IIB"/>
    <property type="match status" value="1"/>
</dbReference>
<dbReference type="Gene3D" id="3.20.20.70">
    <property type="entry name" value="Aldolase class I"/>
    <property type="match status" value="1"/>
</dbReference>
<dbReference type="InterPro" id="IPR013785">
    <property type="entry name" value="Aldolase_TIM"/>
</dbReference>
<dbReference type="InterPro" id="IPR050246">
    <property type="entry name" value="Class_II_FBP_aldolase"/>
</dbReference>
<dbReference type="InterPro" id="IPR000771">
    <property type="entry name" value="FBA_II"/>
</dbReference>
<dbReference type="InterPro" id="IPR011289">
    <property type="entry name" value="Fruc_bis_ald_class-2"/>
</dbReference>
<dbReference type="NCBIfam" id="TIGR00167">
    <property type="entry name" value="cbbA"/>
    <property type="match status" value="1"/>
</dbReference>
<dbReference type="NCBIfam" id="TIGR01859">
    <property type="entry name" value="fruc_bis_ald"/>
    <property type="match status" value="1"/>
</dbReference>
<dbReference type="NCBIfam" id="NF006376">
    <property type="entry name" value="PRK08610.1"/>
    <property type="match status" value="1"/>
</dbReference>
<dbReference type="PANTHER" id="PTHR30304">
    <property type="entry name" value="D-TAGATOSE-1,6-BISPHOSPHATE ALDOLASE"/>
    <property type="match status" value="1"/>
</dbReference>
<dbReference type="PANTHER" id="PTHR30304:SF0">
    <property type="entry name" value="D-TAGATOSE-1,6-BISPHOSPHATE ALDOLASE SUBUNIT GATY-RELATED"/>
    <property type="match status" value="1"/>
</dbReference>
<dbReference type="Pfam" id="PF01116">
    <property type="entry name" value="F_bP_aldolase"/>
    <property type="match status" value="1"/>
</dbReference>
<dbReference type="PIRSF" id="PIRSF001359">
    <property type="entry name" value="F_bP_aldolase_II"/>
    <property type="match status" value="1"/>
</dbReference>
<dbReference type="SUPFAM" id="SSF51569">
    <property type="entry name" value="Aldolase"/>
    <property type="match status" value="1"/>
</dbReference>
<dbReference type="PROSITE" id="PS00806">
    <property type="entry name" value="ALDOLASE_CLASS_II_2"/>
    <property type="match status" value="1"/>
</dbReference>
<feature type="chain" id="PRO_0000178742" description="Fructose-bisphosphate aldolase">
    <location>
        <begin position="1"/>
        <end position="286"/>
    </location>
</feature>
<feature type="active site" description="Proton donor" evidence="1">
    <location>
        <position position="85"/>
    </location>
</feature>
<feature type="binding site" evidence="1">
    <location>
        <position position="50"/>
    </location>
    <ligand>
        <name>D-glyceraldehyde 3-phosphate</name>
        <dbReference type="ChEBI" id="CHEBI:59776"/>
    </ligand>
</feature>
<feature type="binding site" evidence="1">
    <location>
        <position position="86"/>
    </location>
    <ligand>
        <name>Zn(2+)</name>
        <dbReference type="ChEBI" id="CHEBI:29105"/>
        <label>1</label>
        <note>catalytic</note>
    </ligand>
</feature>
<feature type="binding site" evidence="1">
    <location>
        <position position="107"/>
    </location>
    <ligand>
        <name>Zn(2+)</name>
        <dbReference type="ChEBI" id="CHEBI:29105"/>
        <label>2</label>
    </ligand>
</feature>
<feature type="binding site" evidence="1">
    <location>
        <position position="137"/>
    </location>
    <ligand>
        <name>Zn(2+)</name>
        <dbReference type="ChEBI" id="CHEBI:29105"/>
        <label>2</label>
    </ligand>
</feature>
<feature type="binding site" evidence="1">
    <location>
        <position position="181"/>
    </location>
    <ligand>
        <name>Zn(2+)</name>
        <dbReference type="ChEBI" id="CHEBI:29105"/>
        <label>1</label>
        <note>catalytic</note>
    </ligand>
</feature>
<feature type="binding site" evidence="1">
    <location>
        <position position="182"/>
    </location>
    <ligand>
        <name>dihydroxyacetone phosphate</name>
        <dbReference type="ChEBI" id="CHEBI:57642"/>
    </ligand>
</feature>
<feature type="binding site" evidence="1">
    <location>
        <position position="209"/>
    </location>
    <ligand>
        <name>Zn(2+)</name>
        <dbReference type="ChEBI" id="CHEBI:29105"/>
        <label>1</label>
        <note>catalytic</note>
    </ligand>
</feature>
<feature type="binding site" evidence="1">
    <location>
        <begin position="210"/>
        <end position="212"/>
    </location>
    <ligand>
        <name>dihydroxyacetone phosphate</name>
        <dbReference type="ChEBI" id="CHEBI:57642"/>
    </ligand>
</feature>
<feature type="binding site" evidence="1">
    <location>
        <begin position="231"/>
        <end position="234"/>
    </location>
    <ligand>
        <name>dihydroxyacetone phosphate</name>
        <dbReference type="ChEBI" id="CHEBI:57642"/>
    </ligand>
</feature>
<organism>
    <name type="scientific">Staphylococcus epidermidis (strain ATCC 35984 / DSM 28319 / BCRC 17069 / CCUG 31568 / BM 3577 / RP62A)</name>
    <dbReference type="NCBI Taxonomy" id="176279"/>
    <lineage>
        <taxon>Bacteria</taxon>
        <taxon>Bacillati</taxon>
        <taxon>Bacillota</taxon>
        <taxon>Bacilli</taxon>
        <taxon>Bacillales</taxon>
        <taxon>Staphylococcaceae</taxon>
        <taxon>Staphylococcus</taxon>
    </lineage>
</organism>
<evidence type="ECO:0000250" key="1"/>
<evidence type="ECO:0000305" key="2"/>
<keyword id="KW-0324">Glycolysis</keyword>
<keyword id="KW-0456">Lyase</keyword>
<keyword id="KW-0479">Metal-binding</keyword>
<keyword id="KW-1185">Reference proteome</keyword>
<keyword id="KW-0862">Zinc</keyword>
<sequence>MPLVSMKEMLIDAKENGYAVGQYNLNNLEFTQAILEASQEENAPVILGVSEGAARYMSGFYTVVKMVEGLMHDLNITIPVAIHLDHGSSFEKCKEAIDAGFTSVMIDASHSPFEENVEITSKVVEYAHDRGVSVEAELGTVGGQEDDVVADGVIYADPKECQELVEKTGIDTLAPALGSVHGPYKGEPKLGFKEMEEIGASTGLPLVLHGGTGIPTKDIQKAIPYGTAKINVNTENQIASAKAVREVLNNDKDVYDPRKYLGPAREAIKETVKGKIREFGTSNRAK</sequence>
<gene>
    <name type="primary">fba</name>
    <name type="synonym">fbaA</name>
    <name type="ordered locus">SERP1732</name>
</gene>
<protein>
    <recommendedName>
        <fullName>Fructose-bisphosphate aldolase</fullName>
        <shortName>FBP aldolase</shortName>
        <shortName>FBPA</shortName>
        <ecNumber>4.1.2.13</ecNumber>
    </recommendedName>
    <alternativeName>
        <fullName>Fructose-1,6-bisphosphate aldolase</fullName>
    </alternativeName>
</protein>
<comment type="function">
    <text evidence="1">Catalyzes the aldol condensation of dihydroxyacetone phosphate (DHAP or glycerone-phosphate) with glyceraldehyde 3-phosphate (G3P) to form fructose 1,6-bisphosphate (FBP) in gluconeogenesis and the reverse reaction in glycolysis.</text>
</comment>
<comment type="catalytic activity">
    <reaction>
        <text>beta-D-fructose 1,6-bisphosphate = D-glyceraldehyde 3-phosphate + dihydroxyacetone phosphate</text>
        <dbReference type="Rhea" id="RHEA:14729"/>
        <dbReference type="ChEBI" id="CHEBI:32966"/>
        <dbReference type="ChEBI" id="CHEBI:57642"/>
        <dbReference type="ChEBI" id="CHEBI:59776"/>
        <dbReference type="EC" id="4.1.2.13"/>
    </reaction>
</comment>
<comment type="cofactor">
    <cofactor evidence="1">
        <name>Zn(2+)</name>
        <dbReference type="ChEBI" id="CHEBI:29105"/>
    </cofactor>
    <text evidence="1">Binds 2 Zn(2+) ions per subunit. One is catalytic and the other provides a structural contribution.</text>
</comment>
<comment type="pathway">
    <text>Carbohydrate degradation; glycolysis; D-glyceraldehyde 3-phosphate and glycerone phosphate from D-glucose: step 4/4.</text>
</comment>
<comment type="similarity">
    <text evidence="2">Belongs to the class II fructose-bisphosphate aldolase family.</text>
</comment>